<comment type="function">
    <text evidence="1">Binds the lower part of the 30S subunit head. Binds mRNA in the 70S ribosome, positioning it for translation.</text>
</comment>
<comment type="subunit">
    <text evidence="1">Part of the 30S ribosomal subunit. Forms a tight complex with proteins S10 and S14.</text>
</comment>
<comment type="similarity">
    <text evidence="1">Belongs to the universal ribosomal protein uS3 family.</text>
</comment>
<gene>
    <name evidence="1" type="primary">rpsC</name>
    <name type="ordered locus">Lcho_3993</name>
</gene>
<evidence type="ECO:0000255" key="1">
    <source>
        <dbReference type="HAMAP-Rule" id="MF_01309"/>
    </source>
</evidence>
<evidence type="ECO:0000256" key="2">
    <source>
        <dbReference type="SAM" id="MobiDB-lite"/>
    </source>
</evidence>
<evidence type="ECO:0000305" key="3"/>
<proteinExistence type="inferred from homology"/>
<sequence>MGQKIHPTGFRLPVTRNWSSRWYANNRNFAGMLAEDIEVREFLKKKLKNAAVSRVTIERPAKNARITIYSARPGVVIGKKGEDIENLKLELAKMLKVPVAVNIEEVRKPEVDAQLIAESITQQLEKRIMFRRAMKRAMQNAMRLGAQGIKIMSAGRLNGIEIARTEWYREGRVPLHTLRADIDYGTAEAKTTYGVIGVKVWVYRGDRLANGDAPVMRGEDRPEDDRRRRNPRGDRPGDRRGPGAGRGGPGAGRGPADGASAAPSGDAKPGVKRVVRAAPPAAKGE</sequence>
<keyword id="KW-1185">Reference proteome</keyword>
<keyword id="KW-0687">Ribonucleoprotein</keyword>
<keyword id="KW-0689">Ribosomal protein</keyword>
<keyword id="KW-0694">RNA-binding</keyword>
<keyword id="KW-0699">rRNA-binding</keyword>
<feature type="chain" id="PRO_1000140984" description="Small ribosomal subunit protein uS3">
    <location>
        <begin position="1"/>
        <end position="285"/>
    </location>
</feature>
<feature type="domain" description="KH type-2" evidence="1">
    <location>
        <begin position="39"/>
        <end position="107"/>
    </location>
</feature>
<feature type="region of interest" description="Disordered" evidence="2">
    <location>
        <begin position="211"/>
        <end position="285"/>
    </location>
</feature>
<feature type="compositionally biased region" description="Basic and acidic residues" evidence="2">
    <location>
        <begin position="217"/>
        <end position="241"/>
    </location>
</feature>
<feature type="compositionally biased region" description="Gly residues" evidence="2">
    <location>
        <begin position="242"/>
        <end position="255"/>
    </location>
</feature>
<feature type="compositionally biased region" description="Low complexity" evidence="2">
    <location>
        <begin position="256"/>
        <end position="267"/>
    </location>
</feature>
<feature type="compositionally biased region" description="Low complexity" evidence="2">
    <location>
        <begin position="276"/>
        <end position="285"/>
    </location>
</feature>
<organism>
    <name type="scientific">Leptothrix cholodnii (strain ATCC 51168 / LMG 8142 / SP-6)</name>
    <name type="common">Leptothrix discophora (strain SP-6)</name>
    <dbReference type="NCBI Taxonomy" id="395495"/>
    <lineage>
        <taxon>Bacteria</taxon>
        <taxon>Pseudomonadati</taxon>
        <taxon>Pseudomonadota</taxon>
        <taxon>Betaproteobacteria</taxon>
        <taxon>Burkholderiales</taxon>
        <taxon>Sphaerotilaceae</taxon>
        <taxon>Leptothrix</taxon>
    </lineage>
</organism>
<dbReference type="EMBL" id="CP001013">
    <property type="protein sequence ID" value="ACB36247.1"/>
    <property type="molecule type" value="Genomic_DNA"/>
</dbReference>
<dbReference type="RefSeq" id="WP_012348992.1">
    <property type="nucleotide sequence ID" value="NC_010524.1"/>
</dbReference>
<dbReference type="SMR" id="B1Y8I1"/>
<dbReference type="STRING" id="395495.Lcho_3993"/>
<dbReference type="KEGG" id="lch:Lcho_3993"/>
<dbReference type="eggNOG" id="COG0092">
    <property type="taxonomic scope" value="Bacteria"/>
</dbReference>
<dbReference type="HOGENOM" id="CLU_058591_0_1_4"/>
<dbReference type="OrthoDB" id="9806396at2"/>
<dbReference type="Proteomes" id="UP000001693">
    <property type="component" value="Chromosome"/>
</dbReference>
<dbReference type="GO" id="GO:0022627">
    <property type="term" value="C:cytosolic small ribosomal subunit"/>
    <property type="evidence" value="ECO:0007669"/>
    <property type="project" value="TreeGrafter"/>
</dbReference>
<dbReference type="GO" id="GO:0003729">
    <property type="term" value="F:mRNA binding"/>
    <property type="evidence" value="ECO:0007669"/>
    <property type="project" value="UniProtKB-UniRule"/>
</dbReference>
<dbReference type="GO" id="GO:0019843">
    <property type="term" value="F:rRNA binding"/>
    <property type="evidence" value="ECO:0007669"/>
    <property type="project" value="UniProtKB-UniRule"/>
</dbReference>
<dbReference type="GO" id="GO:0003735">
    <property type="term" value="F:structural constituent of ribosome"/>
    <property type="evidence" value="ECO:0007669"/>
    <property type="project" value="InterPro"/>
</dbReference>
<dbReference type="GO" id="GO:0006412">
    <property type="term" value="P:translation"/>
    <property type="evidence" value="ECO:0007669"/>
    <property type="project" value="UniProtKB-UniRule"/>
</dbReference>
<dbReference type="CDD" id="cd02412">
    <property type="entry name" value="KH-II_30S_S3"/>
    <property type="match status" value="1"/>
</dbReference>
<dbReference type="FunFam" id="3.30.1140.32:FF:000006">
    <property type="entry name" value="30S ribosomal protein S3"/>
    <property type="match status" value="1"/>
</dbReference>
<dbReference type="FunFam" id="3.30.300.20:FF:000001">
    <property type="entry name" value="30S ribosomal protein S3"/>
    <property type="match status" value="1"/>
</dbReference>
<dbReference type="Gene3D" id="3.30.300.20">
    <property type="match status" value="1"/>
</dbReference>
<dbReference type="Gene3D" id="3.30.1140.32">
    <property type="entry name" value="Ribosomal protein S3, C-terminal domain"/>
    <property type="match status" value="1"/>
</dbReference>
<dbReference type="HAMAP" id="MF_01309_B">
    <property type="entry name" value="Ribosomal_uS3_B"/>
    <property type="match status" value="1"/>
</dbReference>
<dbReference type="InterPro" id="IPR004087">
    <property type="entry name" value="KH_dom"/>
</dbReference>
<dbReference type="InterPro" id="IPR015946">
    <property type="entry name" value="KH_dom-like_a/b"/>
</dbReference>
<dbReference type="InterPro" id="IPR004044">
    <property type="entry name" value="KH_dom_type_2"/>
</dbReference>
<dbReference type="InterPro" id="IPR009019">
    <property type="entry name" value="KH_sf_prok-type"/>
</dbReference>
<dbReference type="InterPro" id="IPR036419">
    <property type="entry name" value="Ribosomal_S3_C_sf"/>
</dbReference>
<dbReference type="InterPro" id="IPR005704">
    <property type="entry name" value="Ribosomal_uS3_bac-typ"/>
</dbReference>
<dbReference type="InterPro" id="IPR001351">
    <property type="entry name" value="Ribosomal_uS3_C"/>
</dbReference>
<dbReference type="InterPro" id="IPR018280">
    <property type="entry name" value="Ribosomal_uS3_CS"/>
</dbReference>
<dbReference type="NCBIfam" id="TIGR01009">
    <property type="entry name" value="rpsC_bact"/>
    <property type="match status" value="1"/>
</dbReference>
<dbReference type="PANTHER" id="PTHR11760">
    <property type="entry name" value="30S/40S RIBOSOMAL PROTEIN S3"/>
    <property type="match status" value="1"/>
</dbReference>
<dbReference type="PANTHER" id="PTHR11760:SF19">
    <property type="entry name" value="SMALL RIBOSOMAL SUBUNIT PROTEIN US3C"/>
    <property type="match status" value="1"/>
</dbReference>
<dbReference type="Pfam" id="PF07650">
    <property type="entry name" value="KH_2"/>
    <property type="match status" value="1"/>
</dbReference>
<dbReference type="Pfam" id="PF00189">
    <property type="entry name" value="Ribosomal_S3_C"/>
    <property type="match status" value="1"/>
</dbReference>
<dbReference type="SMART" id="SM00322">
    <property type="entry name" value="KH"/>
    <property type="match status" value="1"/>
</dbReference>
<dbReference type="SUPFAM" id="SSF54814">
    <property type="entry name" value="Prokaryotic type KH domain (KH-domain type II)"/>
    <property type="match status" value="1"/>
</dbReference>
<dbReference type="SUPFAM" id="SSF54821">
    <property type="entry name" value="Ribosomal protein S3 C-terminal domain"/>
    <property type="match status" value="1"/>
</dbReference>
<dbReference type="PROSITE" id="PS50823">
    <property type="entry name" value="KH_TYPE_2"/>
    <property type="match status" value="1"/>
</dbReference>
<dbReference type="PROSITE" id="PS00548">
    <property type="entry name" value="RIBOSOMAL_S3"/>
    <property type="match status" value="1"/>
</dbReference>
<reference key="1">
    <citation type="submission" date="2008-03" db="EMBL/GenBank/DDBJ databases">
        <title>Complete sequence of Leptothrix cholodnii SP-6.</title>
        <authorList>
            <consortium name="US DOE Joint Genome Institute"/>
            <person name="Copeland A."/>
            <person name="Lucas S."/>
            <person name="Lapidus A."/>
            <person name="Glavina del Rio T."/>
            <person name="Dalin E."/>
            <person name="Tice H."/>
            <person name="Bruce D."/>
            <person name="Goodwin L."/>
            <person name="Pitluck S."/>
            <person name="Chertkov O."/>
            <person name="Brettin T."/>
            <person name="Detter J.C."/>
            <person name="Han C."/>
            <person name="Kuske C.R."/>
            <person name="Schmutz J."/>
            <person name="Larimer F."/>
            <person name="Land M."/>
            <person name="Hauser L."/>
            <person name="Kyrpides N."/>
            <person name="Lykidis A."/>
            <person name="Emerson D."/>
            <person name="Richardson P."/>
        </authorList>
    </citation>
    <scope>NUCLEOTIDE SEQUENCE [LARGE SCALE GENOMIC DNA]</scope>
    <source>
        <strain>ATCC 51168 / LMG 8142 / SP-6</strain>
    </source>
</reference>
<accession>B1Y8I1</accession>
<name>RS3_LEPCP</name>
<protein>
    <recommendedName>
        <fullName evidence="1">Small ribosomal subunit protein uS3</fullName>
    </recommendedName>
    <alternativeName>
        <fullName evidence="3">30S ribosomal protein S3</fullName>
    </alternativeName>
</protein>